<accession>A8K979</accession>
<accession>Q6ZSJ2</accession>
<accession>Q96FR9</accession>
<accession>Q9P224</accession>
<accession>Q9Y6V3</accession>
<keyword id="KW-0002">3D-structure</keyword>
<keyword id="KW-0025">Alternative splicing</keyword>
<keyword id="KW-0269">Exonuclease</keyword>
<keyword id="KW-0378">Hydrolase</keyword>
<keyword id="KW-0460">Magnesium</keyword>
<keyword id="KW-0479">Metal-binding</keyword>
<keyword id="KW-0540">Nuclease</keyword>
<keyword id="KW-1267">Proteomics identification</keyword>
<keyword id="KW-1185">Reference proteome</keyword>
<keyword id="KW-0862">Zinc</keyword>
<keyword id="KW-0863">Zinc-finger</keyword>
<comment type="cofactor">
    <cofactor evidence="1">
        <name>Mg(2+)</name>
        <dbReference type="ChEBI" id="CHEBI:18420"/>
    </cofactor>
    <text evidence="1">Binds 2 magnesium ions per subunit.</text>
</comment>
<comment type="alternative products">
    <event type="alternative splicing"/>
    <isoform>
        <id>A8K979-1</id>
        <name>1</name>
        <sequence type="displayed"/>
    </isoform>
    <isoform>
        <id>A8K979-2</id>
        <name>2</name>
        <sequence type="described" ref="VSP_034077"/>
    </isoform>
    <isoform>
        <id>A8K979-3</id>
        <name>3</name>
        <sequence type="described" ref="VSP_034079 VSP_034080"/>
    </isoform>
    <isoform>
        <id>A8K979-4</id>
        <name>4</name>
        <sequence type="described" ref="VSP_034078 VSP_034081"/>
    </isoform>
</comment>
<comment type="similarity">
    <text evidence="7">Belongs to the ERI2 family.</text>
</comment>
<comment type="sequence caution" evidence="7">
    <conflict type="erroneous gene model prediction">
        <sequence resource="EMBL-CDS" id="AAC31669"/>
    </conflict>
</comment>
<sequence>MATKRLARQLGLIRRKSIAPANGNLGRSKSKQLFDYLIVIDFESTCWNDGKHHHSQEIIEFPAVLLNTSTGQIDSEFQAYVQPQEHPILSEFCMELTGIKQAQVDEGVPLKICLSQFCKWIHKIQQQKNIIFATGISEPSASEVKLCAFVTWSDWDLGVCLEYECKRKQLLKPVFLNSWIDLRATYKLFYRRKPKGLSGALQEVGIEFSGREHSGLDDSRNTALLAWKMIRDGCVMKITRSLNKVPTKKNFSILARNLNTIQVEEMSACNISIQGPSIYNKEPKNIINPHEKVQMKSICANSPIKAQQDQLQVKNNIKASLHNVKSSLPLFNTKSSTSVGQLQSPTLNSPIYMQKQGKNEHLAFNTKSKASTVGSELVLVSTTVPTVHHVSDLEMSSTLDCLPVLADWEDVVLLPASQPEENVDCTVPISDSDLEISFNSGERLMVLKELEMSSHENFGDIEETPQKSETSKSIVYKSPHTTIYNVKEAKDPGSDISAFKLPEHKSSTFNRVNANMSHPLVLGKHPLLSGGTKRNPCSPQAFPPAKKQPFTIHEEKPTSSDCSPVRSSSWRRLPSILTSTVNLQEPWKSGKMTPPLCKCGRRSKRLVVSNNGPNHGKVFYCCPIGKYQENRKCCGYFKWEQTLQKERANSMVPSHSTGGLTFSSPETSHICDRNLSISTKNSLRLRPSMRN</sequence>
<evidence type="ECO:0000250" key="1"/>
<evidence type="ECO:0000255" key="2"/>
<evidence type="ECO:0000255" key="3">
    <source>
        <dbReference type="PROSITE-ProRule" id="PRU01343"/>
    </source>
</evidence>
<evidence type="ECO:0000269" key="4">
    <source>
    </source>
</evidence>
<evidence type="ECO:0000303" key="5">
    <source>
    </source>
</evidence>
<evidence type="ECO:0000303" key="6">
    <source>
    </source>
</evidence>
<evidence type="ECO:0000305" key="7"/>
<evidence type="ECO:0007829" key="8">
    <source>
        <dbReference type="PDB" id="7N8V"/>
    </source>
</evidence>
<evidence type="ECO:0007829" key="9">
    <source>
        <dbReference type="PDB" id="7N8W"/>
    </source>
</evidence>
<protein>
    <recommendedName>
        <fullName>ERI1 exoribonuclease 2</fullName>
        <ecNumber>3.1.-.-</ecNumber>
    </recommendedName>
    <alternativeName>
        <fullName>Exonuclease domain-containing protein 1</fullName>
    </alternativeName>
</protein>
<feature type="chain" id="PRO_0000338973" description="ERI1 exoribonuclease 2">
    <location>
        <begin position="1"/>
        <end position="691"/>
    </location>
</feature>
<feature type="domain" description="Exonuclease">
    <location>
        <begin position="37"/>
        <end position="226"/>
    </location>
</feature>
<feature type="zinc finger region" description="GRF-type" evidence="3">
    <location>
        <begin position="597"/>
        <end position="643"/>
    </location>
</feature>
<feature type="active site" description="Proton acceptor" evidence="2">
    <location>
        <position position="43"/>
    </location>
</feature>
<feature type="active site" description="Proton acceptor" evidence="2">
    <location>
        <position position="213"/>
    </location>
</feature>
<feature type="binding site" evidence="1">
    <location>
        <position position="41"/>
    </location>
    <ligand>
        <name>Mg(2+)</name>
        <dbReference type="ChEBI" id="CHEBI:18420"/>
        <label>1</label>
    </ligand>
</feature>
<feature type="binding site" evidence="1">
    <location>
        <position position="41"/>
    </location>
    <ligand>
        <name>Mg(2+)</name>
        <dbReference type="ChEBI" id="CHEBI:18420"/>
        <label>2</label>
    </ligand>
</feature>
<feature type="binding site" evidence="1">
    <location>
        <position position="43"/>
    </location>
    <ligand>
        <name>AMP</name>
        <dbReference type="ChEBI" id="CHEBI:456215"/>
    </ligand>
</feature>
<feature type="binding site" evidence="1">
    <location>
        <position position="43"/>
    </location>
    <ligand>
        <name>Mg(2+)</name>
        <dbReference type="ChEBI" id="CHEBI:18420"/>
        <label>1</label>
    </ligand>
</feature>
<feature type="binding site" evidence="1">
    <location>
        <position position="156"/>
    </location>
    <ligand>
        <name>Mg(2+)</name>
        <dbReference type="ChEBI" id="CHEBI:18420"/>
        <label>2</label>
    </ligand>
</feature>
<feature type="binding site" evidence="1">
    <location>
        <position position="213"/>
    </location>
    <ligand>
        <name>AMP</name>
        <dbReference type="ChEBI" id="CHEBI:456215"/>
    </ligand>
</feature>
<feature type="binding site" evidence="1">
    <location>
        <position position="218"/>
    </location>
    <ligand>
        <name>Mg(2+)</name>
        <dbReference type="ChEBI" id="CHEBI:18420"/>
        <label>1</label>
    </ligand>
</feature>
<feature type="binding site" evidence="3">
    <location>
        <position position="597"/>
    </location>
    <ligand>
        <name>Zn(2+)</name>
        <dbReference type="ChEBI" id="CHEBI:29105"/>
    </ligand>
</feature>
<feature type="binding site" evidence="3">
    <location>
        <position position="599"/>
    </location>
    <ligand>
        <name>Zn(2+)</name>
        <dbReference type="ChEBI" id="CHEBI:29105"/>
    </ligand>
</feature>
<feature type="binding site" evidence="3">
    <location>
        <position position="622"/>
    </location>
    <ligand>
        <name>Zn(2+)</name>
        <dbReference type="ChEBI" id="CHEBI:29105"/>
    </ligand>
</feature>
<feature type="binding site" evidence="3">
    <location>
        <position position="634"/>
    </location>
    <ligand>
        <name>Zn(2+)</name>
        <dbReference type="ChEBI" id="CHEBI:29105"/>
    </ligand>
</feature>
<feature type="splice variant" id="VSP_034077" description="In isoform 2." evidence="5">
    <location>
        <begin position="1"/>
        <end position="93"/>
    </location>
</feature>
<feature type="splice variant" id="VSP_034078" description="In isoform 4." evidence="6">
    <original>VPTKKNFSILARNLNTIQVEEMSACNISIQGPSIYNKEPKNIINPHEKVQMKSICANSPIKAQQDQLQVKNNIKASLHNVKSSL</original>
    <variation>GPFLLPSWTWNSDLASGDQHAFLQQEFGCGTYRTLLQKPNMSKQEKGNILWLTMVWLSLACLQRKNYNDCMLNTASQTVTTEKF</variation>
    <location>
        <begin position="245"/>
        <end position="328"/>
    </location>
</feature>
<feature type="splice variant" id="VSP_034079" description="In isoform 3." evidence="5">
    <original>PTKKNFSILARNLNTIQVEEMSACNISIQGPSIY</original>
    <variation>VPKGIHAVPKLSHQQKNNPSLFMKKSLHHLIAPQ</variation>
    <location>
        <begin position="246"/>
        <end position="279"/>
    </location>
</feature>
<feature type="splice variant" id="VSP_034080" description="In isoform 3." evidence="5">
    <location>
        <begin position="280"/>
        <end position="691"/>
    </location>
</feature>
<feature type="splice variant" id="VSP_034081" description="In isoform 4." evidence="6">
    <location>
        <begin position="329"/>
        <end position="691"/>
    </location>
</feature>
<feature type="sequence variant" id="VAR_043848" description="In a colorectal cancer sample; somatic mutation; dbSNP:rs997506328." evidence="4">
    <original>I</original>
    <variation>T</variation>
    <location>
        <position position="206"/>
    </location>
</feature>
<feature type="sequence conflict" description="In Ref. 4; BAA96028." evidence="7" ref="4">
    <original>Y</original>
    <variation>C</variation>
    <location>
        <position position="352"/>
    </location>
</feature>
<feature type="strand" evidence="8">
    <location>
        <begin position="35"/>
        <end position="40"/>
    </location>
</feature>
<feature type="strand" evidence="9">
    <location>
        <begin position="49"/>
        <end position="51"/>
    </location>
</feature>
<feature type="strand" evidence="8">
    <location>
        <begin position="58"/>
        <end position="67"/>
    </location>
</feature>
<feature type="turn" evidence="8">
    <location>
        <begin position="68"/>
        <end position="70"/>
    </location>
</feature>
<feature type="strand" evidence="8">
    <location>
        <begin position="73"/>
        <end position="81"/>
    </location>
</feature>
<feature type="strand" evidence="8">
    <location>
        <begin position="84"/>
        <end position="86"/>
    </location>
</feature>
<feature type="helix" evidence="8">
    <location>
        <begin position="91"/>
        <end position="97"/>
    </location>
</feature>
<feature type="helix" evidence="8">
    <location>
        <begin position="101"/>
        <end position="106"/>
    </location>
</feature>
<feature type="helix" evidence="8">
    <location>
        <begin position="110"/>
        <end position="128"/>
    </location>
</feature>
<feature type="strand" evidence="8">
    <location>
        <begin position="145"/>
        <end position="153"/>
    </location>
</feature>
<feature type="helix" evidence="8">
    <location>
        <begin position="155"/>
        <end position="158"/>
    </location>
</feature>
<feature type="helix" evidence="8">
    <location>
        <begin position="160"/>
        <end position="168"/>
    </location>
</feature>
<feature type="helix" evidence="8">
    <location>
        <begin position="174"/>
        <end position="177"/>
    </location>
</feature>
<feature type="strand" evidence="8">
    <location>
        <begin position="178"/>
        <end position="181"/>
    </location>
</feature>
<feature type="helix" evidence="8">
    <location>
        <begin position="182"/>
        <end position="190"/>
    </location>
</feature>
<feature type="helix" evidence="8">
    <location>
        <begin position="196"/>
        <end position="203"/>
    </location>
</feature>
<feature type="helix" evidence="8">
    <location>
        <begin position="216"/>
        <end position="231"/>
    </location>
</feature>
<feature type="sequence variant" id="VAR_082819" description="In dbSNP:rs17850670." evidence="7">
    <original>Q</original>
    <variation>K</variation>
    <location sequence="A8K979-4">
        <position position="268"/>
    </location>
</feature>
<feature type="sequence variant" id="VAR_082820" description="In dbSNP:rs2301770." evidence="7">
    <original>G</original>
    <variation>E</variation>
    <location sequence="A8K979-4">
        <position position="272"/>
    </location>
</feature>
<organism>
    <name type="scientific">Homo sapiens</name>
    <name type="common">Human</name>
    <dbReference type="NCBI Taxonomy" id="9606"/>
    <lineage>
        <taxon>Eukaryota</taxon>
        <taxon>Metazoa</taxon>
        <taxon>Chordata</taxon>
        <taxon>Craniata</taxon>
        <taxon>Vertebrata</taxon>
        <taxon>Euteleostomi</taxon>
        <taxon>Mammalia</taxon>
        <taxon>Eutheria</taxon>
        <taxon>Euarchontoglires</taxon>
        <taxon>Primates</taxon>
        <taxon>Haplorrhini</taxon>
        <taxon>Catarrhini</taxon>
        <taxon>Hominidae</taxon>
        <taxon>Homo</taxon>
    </lineage>
</organism>
<proteinExistence type="evidence at protein level"/>
<reference key="1">
    <citation type="journal article" date="2004" name="Nat. Genet.">
        <title>Complete sequencing and characterization of 21,243 full-length human cDNAs.</title>
        <authorList>
            <person name="Ota T."/>
            <person name="Suzuki Y."/>
            <person name="Nishikawa T."/>
            <person name="Otsuki T."/>
            <person name="Sugiyama T."/>
            <person name="Irie R."/>
            <person name="Wakamatsu A."/>
            <person name="Hayashi K."/>
            <person name="Sato H."/>
            <person name="Nagai K."/>
            <person name="Kimura K."/>
            <person name="Makita H."/>
            <person name="Sekine M."/>
            <person name="Obayashi M."/>
            <person name="Nishi T."/>
            <person name="Shibahara T."/>
            <person name="Tanaka T."/>
            <person name="Ishii S."/>
            <person name="Yamamoto J."/>
            <person name="Saito K."/>
            <person name="Kawai Y."/>
            <person name="Isono Y."/>
            <person name="Nakamura Y."/>
            <person name="Nagahari K."/>
            <person name="Murakami K."/>
            <person name="Yasuda T."/>
            <person name="Iwayanagi T."/>
            <person name="Wagatsuma M."/>
            <person name="Shiratori A."/>
            <person name="Sudo H."/>
            <person name="Hosoiri T."/>
            <person name="Kaku Y."/>
            <person name="Kodaira H."/>
            <person name="Kondo H."/>
            <person name="Sugawara M."/>
            <person name="Takahashi M."/>
            <person name="Kanda K."/>
            <person name="Yokoi T."/>
            <person name="Furuya T."/>
            <person name="Kikkawa E."/>
            <person name="Omura Y."/>
            <person name="Abe K."/>
            <person name="Kamihara K."/>
            <person name="Katsuta N."/>
            <person name="Sato K."/>
            <person name="Tanikawa M."/>
            <person name="Yamazaki M."/>
            <person name="Ninomiya K."/>
            <person name="Ishibashi T."/>
            <person name="Yamashita H."/>
            <person name="Murakawa K."/>
            <person name="Fujimori K."/>
            <person name="Tanai H."/>
            <person name="Kimata M."/>
            <person name="Watanabe M."/>
            <person name="Hiraoka S."/>
            <person name="Chiba Y."/>
            <person name="Ishida S."/>
            <person name="Ono Y."/>
            <person name="Takiguchi S."/>
            <person name="Watanabe S."/>
            <person name="Yosida M."/>
            <person name="Hotuta T."/>
            <person name="Kusano J."/>
            <person name="Kanehori K."/>
            <person name="Takahashi-Fujii A."/>
            <person name="Hara H."/>
            <person name="Tanase T.-O."/>
            <person name="Nomura Y."/>
            <person name="Togiya S."/>
            <person name="Komai F."/>
            <person name="Hara R."/>
            <person name="Takeuchi K."/>
            <person name="Arita M."/>
            <person name="Imose N."/>
            <person name="Musashino K."/>
            <person name="Yuuki H."/>
            <person name="Oshima A."/>
            <person name="Sasaki N."/>
            <person name="Aotsuka S."/>
            <person name="Yoshikawa Y."/>
            <person name="Matsunawa H."/>
            <person name="Ichihara T."/>
            <person name="Shiohata N."/>
            <person name="Sano S."/>
            <person name="Moriya S."/>
            <person name="Momiyama H."/>
            <person name="Satoh N."/>
            <person name="Takami S."/>
            <person name="Terashima Y."/>
            <person name="Suzuki O."/>
            <person name="Nakagawa S."/>
            <person name="Senoh A."/>
            <person name="Mizoguchi H."/>
            <person name="Goto Y."/>
            <person name="Shimizu F."/>
            <person name="Wakebe H."/>
            <person name="Hishigaki H."/>
            <person name="Watanabe T."/>
            <person name="Sugiyama A."/>
            <person name="Takemoto M."/>
            <person name="Kawakami B."/>
            <person name="Yamazaki M."/>
            <person name="Watanabe K."/>
            <person name="Kumagai A."/>
            <person name="Itakura S."/>
            <person name="Fukuzumi Y."/>
            <person name="Fujimori Y."/>
            <person name="Komiyama M."/>
            <person name="Tashiro H."/>
            <person name="Tanigami A."/>
            <person name="Fujiwara T."/>
            <person name="Ono T."/>
            <person name="Yamada K."/>
            <person name="Fujii Y."/>
            <person name="Ozaki K."/>
            <person name="Hirao M."/>
            <person name="Ohmori Y."/>
            <person name="Kawabata A."/>
            <person name="Hikiji T."/>
            <person name="Kobatake N."/>
            <person name="Inagaki H."/>
            <person name="Ikema Y."/>
            <person name="Okamoto S."/>
            <person name="Okitani R."/>
            <person name="Kawakami T."/>
            <person name="Noguchi S."/>
            <person name="Itoh T."/>
            <person name="Shigeta K."/>
            <person name="Senba T."/>
            <person name="Matsumura K."/>
            <person name="Nakajima Y."/>
            <person name="Mizuno T."/>
            <person name="Morinaga M."/>
            <person name="Sasaki M."/>
            <person name="Togashi T."/>
            <person name="Oyama M."/>
            <person name="Hata H."/>
            <person name="Watanabe M."/>
            <person name="Komatsu T."/>
            <person name="Mizushima-Sugano J."/>
            <person name="Satoh T."/>
            <person name="Shirai Y."/>
            <person name="Takahashi Y."/>
            <person name="Nakagawa K."/>
            <person name="Okumura K."/>
            <person name="Nagase T."/>
            <person name="Nomura N."/>
            <person name="Kikuchi H."/>
            <person name="Masuho Y."/>
            <person name="Yamashita R."/>
            <person name="Nakai K."/>
            <person name="Yada T."/>
            <person name="Nakamura Y."/>
            <person name="Ohara O."/>
            <person name="Isogai T."/>
            <person name="Sugano S."/>
        </authorList>
    </citation>
    <scope>NUCLEOTIDE SEQUENCE [LARGE SCALE MRNA] (ISOFORMS 2 AND 3)</scope>
    <source>
        <tissue>Testis</tissue>
        <tissue>Thalamus</tissue>
    </source>
</reference>
<reference key="2">
    <citation type="journal article" date="1999" name="Genomics">
        <title>Genome duplications and other features in 12 Mb of DNA sequence from human chromosome 16p and 16q.</title>
        <authorList>
            <person name="Loftus B.J."/>
            <person name="Kim U.-J."/>
            <person name="Sneddon V.P."/>
            <person name="Kalush F."/>
            <person name="Brandon R."/>
            <person name="Fuhrmann J."/>
            <person name="Mason T."/>
            <person name="Crosby M.L."/>
            <person name="Barnstead M."/>
            <person name="Cronin L."/>
            <person name="Mays A.D."/>
            <person name="Cao Y."/>
            <person name="Xu R.X."/>
            <person name="Kang H.-L."/>
            <person name="Mitchell S."/>
            <person name="Eichler E.E."/>
            <person name="Harris P.C."/>
            <person name="Venter J.C."/>
            <person name="Adams M.D."/>
        </authorList>
    </citation>
    <scope>NUCLEOTIDE SEQUENCE [LARGE SCALE GENOMIC DNA]</scope>
</reference>
<reference key="3">
    <citation type="journal article" date="2004" name="Genome Res.">
        <title>The status, quality, and expansion of the NIH full-length cDNA project: the Mammalian Gene Collection (MGC).</title>
        <authorList>
            <consortium name="The MGC Project Team"/>
        </authorList>
    </citation>
    <scope>NUCLEOTIDE SEQUENCE [LARGE SCALE MRNA] (ISOFORM 4)</scope>
    <source>
        <tissue>Placenta</tissue>
    </source>
</reference>
<reference key="4">
    <citation type="journal article" date="2000" name="DNA Res.">
        <title>Prediction of the coding sequences of unidentified human genes. XVII. The complete sequences of 100 new cDNA clones from brain which code for large proteins in vitro.</title>
        <authorList>
            <person name="Nagase T."/>
            <person name="Kikuno R."/>
            <person name="Ishikawa K."/>
            <person name="Hirosawa M."/>
            <person name="Ohara O."/>
        </authorList>
    </citation>
    <scope>NUCLEOTIDE SEQUENCE [LARGE SCALE MRNA] OF 245-691</scope>
</reference>
<reference key="5">
    <citation type="journal article" date="2006" name="Science">
        <title>The consensus coding sequences of human breast and colorectal cancers.</title>
        <authorList>
            <person name="Sjoeblom T."/>
            <person name="Jones S."/>
            <person name="Wood L.D."/>
            <person name="Parsons D.W."/>
            <person name="Lin J."/>
            <person name="Barber T.D."/>
            <person name="Mandelker D."/>
            <person name="Leary R.J."/>
            <person name="Ptak J."/>
            <person name="Silliman N."/>
            <person name="Szabo S."/>
            <person name="Buckhaults P."/>
            <person name="Farrell C."/>
            <person name="Meeh P."/>
            <person name="Markowitz S.D."/>
            <person name="Willis J."/>
            <person name="Dawson D."/>
            <person name="Willson J.K.V."/>
            <person name="Gazdar A.F."/>
            <person name="Hartigan J."/>
            <person name="Wu L."/>
            <person name="Liu C."/>
            <person name="Parmigiani G."/>
            <person name="Park B.H."/>
            <person name="Bachman K.E."/>
            <person name="Papadopoulos N."/>
            <person name="Vogelstein B."/>
            <person name="Kinzler K.W."/>
            <person name="Velculescu V.E."/>
        </authorList>
    </citation>
    <scope>VARIANT [LARGE SCALE ANALYSIS] THR-206</scope>
</reference>
<gene>
    <name type="primary">ERI2</name>
    <name type="synonym">EXOD1</name>
    <name type="synonym">KIAA1504</name>
</gene>
<dbReference type="EC" id="3.1.-.-"/>
<dbReference type="EMBL" id="AK127391">
    <property type="protein sequence ID" value="BAC86956.1"/>
    <property type="molecule type" value="mRNA"/>
</dbReference>
<dbReference type="EMBL" id="AK292594">
    <property type="protein sequence ID" value="BAF85283.1"/>
    <property type="molecule type" value="mRNA"/>
</dbReference>
<dbReference type="EMBL" id="AC004381">
    <property type="protein sequence ID" value="AAC31669.1"/>
    <property type="status" value="ALT_SEQ"/>
    <property type="molecule type" value="Genomic_DNA"/>
</dbReference>
<dbReference type="EMBL" id="BC010503">
    <property type="protein sequence ID" value="AAH10503.1"/>
    <property type="molecule type" value="mRNA"/>
</dbReference>
<dbReference type="EMBL" id="AB040937">
    <property type="protein sequence ID" value="BAA96028.1"/>
    <property type="molecule type" value="mRNA"/>
</dbReference>
<dbReference type="CCDS" id="CCDS10590.1">
    <molecule id="A8K979-4"/>
</dbReference>
<dbReference type="CCDS" id="CCDS45436.1">
    <molecule id="A8K979-1"/>
</dbReference>
<dbReference type="RefSeq" id="NP_001136197.1">
    <molecule id="A8K979-1"/>
    <property type="nucleotide sequence ID" value="NM_001142725.2"/>
</dbReference>
<dbReference type="RefSeq" id="NP_542394.2">
    <molecule id="A8K979-4"/>
    <property type="nucleotide sequence ID" value="NM_080663.3"/>
</dbReference>
<dbReference type="PDB" id="7N8V">
    <property type="method" value="X-ray"/>
    <property type="resolution" value="2.10 A"/>
    <property type="chains" value="A/B=1-243"/>
</dbReference>
<dbReference type="PDB" id="7N8W">
    <property type="method" value="X-ray"/>
    <property type="resolution" value="2.35 A"/>
    <property type="chains" value="A/B=1-243"/>
</dbReference>
<dbReference type="PDBsum" id="7N8V"/>
<dbReference type="PDBsum" id="7N8W"/>
<dbReference type="SMR" id="A8K979"/>
<dbReference type="BioGRID" id="125189">
    <property type="interactions" value="4"/>
</dbReference>
<dbReference type="FunCoup" id="A8K979">
    <property type="interactions" value="1443"/>
</dbReference>
<dbReference type="IntAct" id="A8K979">
    <property type="interactions" value="5"/>
</dbReference>
<dbReference type="MINT" id="A8K979"/>
<dbReference type="STRING" id="9606.ENSP00000350651"/>
<dbReference type="GlyGen" id="A8K979">
    <property type="glycosylation" value="3 sites, 2 N-linked glycans (2 sites), 1 O-linked glycan (1 site)"/>
</dbReference>
<dbReference type="iPTMnet" id="A8K979"/>
<dbReference type="PhosphoSitePlus" id="A8K979"/>
<dbReference type="BioMuta" id="ERI2"/>
<dbReference type="jPOST" id="A8K979"/>
<dbReference type="MassIVE" id="A8K979"/>
<dbReference type="PaxDb" id="9606-ENSP00000350651"/>
<dbReference type="PeptideAtlas" id="A8K979"/>
<dbReference type="ProteomicsDB" id="1893">
    <molecule id="A8K979-1"/>
</dbReference>
<dbReference type="ProteomicsDB" id="1894">
    <molecule id="A8K979-2"/>
</dbReference>
<dbReference type="Antibodypedia" id="25615">
    <property type="antibodies" value="109 antibodies from 18 providers"/>
</dbReference>
<dbReference type="DNASU" id="112479"/>
<dbReference type="Ensembl" id="ENST00000300005.7">
    <molecule id="A8K979-4"/>
    <property type="protein sequence ID" value="ENSP00000300005.3"/>
    <property type="gene ID" value="ENSG00000196678.14"/>
</dbReference>
<dbReference type="Ensembl" id="ENST00000357967.9">
    <molecule id="A8K979-1"/>
    <property type="protein sequence ID" value="ENSP00000350651.4"/>
    <property type="gene ID" value="ENSG00000196678.14"/>
</dbReference>
<dbReference type="Ensembl" id="ENST00000563117.5">
    <molecule id="A8K979-2"/>
    <property type="protein sequence ID" value="ENSP00000454661.1"/>
    <property type="gene ID" value="ENSG00000196678.14"/>
</dbReference>
<dbReference type="Ensembl" id="ENST00000564349.5">
    <molecule id="A8K979-2"/>
    <property type="protein sequence ID" value="ENSP00000455982.1"/>
    <property type="gene ID" value="ENSG00000196678.14"/>
</dbReference>
<dbReference type="Ensembl" id="ENST00000569729.5">
    <molecule id="A8K979-3"/>
    <property type="protein sequence ID" value="ENSP00000457488.1"/>
    <property type="gene ID" value="ENSG00000196678.14"/>
</dbReference>
<dbReference type="GeneID" id="112479"/>
<dbReference type="KEGG" id="hsa:112479"/>
<dbReference type="MANE-Select" id="ENST00000357967.9">
    <property type="protein sequence ID" value="ENSP00000350651.4"/>
    <property type="RefSeq nucleotide sequence ID" value="NM_001142725.2"/>
    <property type="RefSeq protein sequence ID" value="NP_001136197.1"/>
</dbReference>
<dbReference type="UCSC" id="uc002dhs.3">
    <molecule id="A8K979-1"/>
    <property type="organism name" value="human"/>
</dbReference>
<dbReference type="AGR" id="HGNC:30541"/>
<dbReference type="CTD" id="112479"/>
<dbReference type="DisGeNET" id="112479"/>
<dbReference type="GeneCards" id="ERI2"/>
<dbReference type="HGNC" id="HGNC:30541">
    <property type="gene designation" value="ERI2"/>
</dbReference>
<dbReference type="HPA" id="ENSG00000196678">
    <property type="expression patterns" value="Low tissue specificity"/>
</dbReference>
<dbReference type="neXtProt" id="NX_A8K979"/>
<dbReference type="OpenTargets" id="ENSG00000196678"/>
<dbReference type="PharmGKB" id="PA164719245"/>
<dbReference type="VEuPathDB" id="HostDB:ENSG00000196678"/>
<dbReference type="eggNOG" id="KOG0542">
    <property type="taxonomic scope" value="Eukaryota"/>
</dbReference>
<dbReference type="GeneTree" id="ENSGT00530000063205"/>
<dbReference type="HOGENOM" id="CLU_037266_4_0_1"/>
<dbReference type="InParanoid" id="A8K979"/>
<dbReference type="OMA" id="CRELTHI"/>
<dbReference type="OrthoDB" id="448399at2759"/>
<dbReference type="PAN-GO" id="A8K979">
    <property type="GO annotations" value="2 GO annotations based on evolutionary models"/>
</dbReference>
<dbReference type="PhylomeDB" id="A8K979"/>
<dbReference type="TreeFam" id="TF313449"/>
<dbReference type="PathwayCommons" id="A8K979"/>
<dbReference type="SignaLink" id="A8K979"/>
<dbReference type="BioGRID-ORCS" id="112479">
    <property type="hits" value="16 hits in 1157 CRISPR screens"/>
</dbReference>
<dbReference type="ChiTaRS" id="ERI2">
    <property type="organism name" value="human"/>
</dbReference>
<dbReference type="GenomeRNAi" id="112479"/>
<dbReference type="Pharos" id="A8K979">
    <property type="development level" value="Tbio"/>
</dbReference>
<dbReference type="PRO" id="PR:A8K979"/>
<dbReference type="Proteomes" id="UP000005640">
    <property type="component" value="Chromosome 16"/>
</dbReference>
<dbReference type="RNAct" id="A8K979">
    <property type="molecule type" value="protein"/>
</dbReference>
<dbReference type="Bgee" id="ENSG00000196678">
    <property type="expression patterns" value="Expressed in oocyte and 185 other cell types or tissues"/>
</dbReference>
<dbReference type="ExpressionAtlas" id="A8K979">
    <property type="expression patterns" value="baseline and differential"/>
</dbReference>
<dbReference type="GO" id="GO:0000175">
    <property type="term" value="F:3'-5'-RNA exonuclease activity"/>
    <property type="evidence" value="ECO:0000318"/>
    <property type="project" value="GO_Central"/>
</dbReference>
<dbReference type="GO" id="GO:0003676">
    <property type="term" value="F:nucleic acid binding"/>
    <property type="evidence" value="ECO:0007669"/>
    <property type="project" value="InterPro"/>
</dbReference>
<dbReference type="GO" id="GO:0008270">
    <property type="term" value="F:zinc ion binding"/>
    <property type="evidence" value="ECO:0007669"/>
    <property type="project" value="UniProtKB-KW"/>
</dbReference>
<dbReference type="CDD" id="cd06133">
    <property type="entry name" value="ERI-1_3'hExo_like"/>
    <property type="match status" value="1"/>
</dbReference>
<dbReference type="FunFam" id="3.30.420.10:FF:000062">
    <property type="entry name" value="ERI1 exoribonuclease 2 isoform X1"/>
    <property type="match status" value="1"/>
</dbReference>
<dbReference type="Gene3D" id="3.30.420.10">
    <property type="entry name" value="Ribonuclease H-like superfamily/Ribonuclease H"/>
    <property type="match status" value="1"/>
</dbReference>
<dbReference type="InterPro" id="IPR051274">
    <property type="entry name" value="3-5_Exoribonuclease"/>
</dbReference>
<dbReference type="InterPro" id="IPR047201">
    <property type="entry name" value="ERI-1_3'hExo-like"/>
</dbReference>
<dbReference type="InterPro" id="IPR013520">
    <property type="entry name" value="Exonuclease_RNaseT/DNA_pol3"/>
</dbReference>
<dbReference type="InterPro" id="IPR012337">
    <property type="entry name" value="RNaseH-like_sf"/>
</dbReference>
<dbReference type="InterPro" id="IPR036397">
    <property type="entry name" value="RNaseH_sf"/>
</dbReference>
<dbReference type="InterPro" id="IPR010666">
    <property type="entry name" value="Znf_GRF"/>
</dbReference>
<dbReference type="PANTHER" id="PTHR23044">
    <property type="entry name" value="3'-5' EXONUCLEASE ERI1-RELATED"/>
    <property type="match status" value="1"/>
</dbReference>
<dbReference type="PANTHER" id="PTHR23044:SF61">
    <property type="entry name" value="3'-5' EXORIBONUCLEASE 1-RELATED"/>
    <property type="match status" value="1"/>
</dbReference>
<dbReference type="Pfam" id="PF00929">
    <property type="entry name" value="RNase_T"/>
    <property type="match status" value="1"/>
</dbReference>
<dbReference type="Pfam" id="PF06839">
    <property type="entry name" value="Zn_ribbon_GRF"/>
    <property type="match status" value="1"/>
</dbReference>
<dbReference type="SMART" id="SM00479">
    <property type="entry name" value="EXOIII"/>
    <property type="match status" value="1"/>
</dbReference>
<dbReference type="SUPFAM" id="SSF53098">
    <property type="entry name" value="Ribonuclease H-like"/>
    <property type="match status" value="1"/>
</dbReference>
<dbReference type="PROSITE" id="PS51999">
    <property type="entry name" value="ZF_GRF"/>
    <property type="match status" value="1"/>
</dbReference>
<name>ERI2_HUMAN</name>